<comment type="function">
    <text evidence="3">During mitosis, may play a role in the control of metaphase-to-anaphase transition.</text>
</comment>
<comment type="subunit">
    <text evidence="2 3">Isoform 1 and isoform 2 interact with PICALM; this interaction may target PICALM to the nucleus (PubMed:16491119). During mitosis, associates with HDAC2 and MTA2 subunits of the chromatin-remodeling NuRD complex; this association is strongest at prometaphase and decreases as the cell progresses through metaphase and anaphase (PubMed:18757745).</text>
</comment>
<comment type="interaction">
    <interactant intactId="EBI-2568609">
        <id>Q9BSJ6</id>
    </interactant>
    <interactant intactId="EBI-741181">
        <id>Q6RW13</id>
        <label>AGTRAP</label>
    </interactant>
    <organismsDiffer>false</organismsDiffer>
    <experiments>3</experiments>
</comment>
<comment type="interaction">
    <interactant intactId="EBI-2568609">
        <id>Q9BSJ6</id>
    </interactant>
    <interactant intactId="EBI-11522760">
        <id>Q6RW13-2</id>
        <label>AGTRAP</label>
    </interactant>
    <organismsDiffer>false</organismsDiffer>
    <experiments>3</experiments>
</comment>
<comment type="interaction">
    <interactant intactId="EBI-2568609">
        <id>Q9BSJ6</id>
    </interactant>
    <interactant intactId="EBI-742909">
        <id>Q9H6L4</id>
        <label>ARMC7</label>
    </interactant>
    <organismsDiffer>false</organismsDiffer>
    <experiments>3</experiments>
</comment>
<comment type="interaction">
    <interactant intactId="EBI-2568609">
        <id>Q9BSJ6</id>
    </interactant>
    <interactant intactId="EBI-724373">
        <id>Q7L4P6</id>
        <label>BEND5</label>
    </interactant>
    <organismsDiffer>false</organismsDiffer>
    <experiments>3</experiments>
</comment>
<comment type="interaction">
    <interactant intactId="EBI-2568609">
        <id>Q9BSJ6</id>
    </interactant>
    <interactant intactId="EBI-748961">
        <id>O95273</id>
        <label>CCNDBP1</label>
    </interactant>
    <organismsDiffer>false</organismsDiffer>
    <experiments>6</experiments>
</comment>
<comment type="interaction">
    <interactant intactId="EBI-2568609">
        <id>Q9BSJ6</id>
    </interactant>
    <interactant intactId="EBI-739624">
        <id>Q8NHQ1</id>
        <label>CEP70</label>
    </interactant>
    <organismsDiffer>false</organismsDiffer>
    <experiments>6</experiments>
</comment>
<comment type="interaction">
    <interactant intactId="EBI-2568609">
        <id>Q9BSJ6</id>
    </interactant>
    <interactant intactId="EBI-11522780">
        <id>Q96DZ9-2</id>
        <label>CMTM5</label>
    </interactant>
    <organismsDiffer>false</organismsDiffer>
    <experiments>3</experiments>
</comment>
<comment type="interaction">
    <interactant intactId="EBI-2568609">
        <id>Q9BSJ6</id>
    </interactant>
    <interactant intactId="EBI-348169">
        <id>P67870</id>
        <label>CSNK2B</label>
    </interactant>
    <organismsDiffer>false</organismsDiffer>
    <experiments>3</experiments>
</comment>
<comment type="interaction">
    <interactant intactId="EBI-2568609">
        <id>Q9BSJ6</id>
    </interactant>
    <interactant intactId="EBI-2548605">
        <id>Q8NF50</id>
        <label>DOCK8</label>
    </interactant>
    <organismsDiffer>false</organismsDiffer>
    <experiments>3</experiments>
</comment>
<comment type="interaction">
    <interactant intactId="EBI-2568609">
        <id>Q9BSJ6</id>
    </interactant>
    <interactant intactId="EBI-489887">
        <id>P50402</id>
        <label>EMD</label>
    </interactant>
    <organismsDiffer>false</organismsDiffer>
    <experiments>3</experiments>
</comment>
<comment type="interaction">
    <interactant intactId="EBI-2568609">
        <id>Q9BSJ6</id>
    </interactant>
    <interactant intactId="EBI-618309">
        <id>Q08379</id>
        <label>GOLGA2</label>
    </interactant>
    <organismsDiffer>false</organismsDiffer>
    <experiments>3</experiments>
</comment>
<comment type="interaction">
    <interactant intactId="EBI-2568609">
        <id>Q9BSJ6</id>
    </interactant>
    <interactant intactId="EBI-10961706">
        <id>Q96ED9-2</id>
        <label>HOOK2</label>
    </interactant>
    <organismsDiffer>false</organismsDiffer>
    <experiments>3</experiments>
</comment>
<comment type="interaction">
    <interactant intactId="EBI-2568609">
        <id>Q9BSJ6</id>
    </interactant>
    <interactant intactId="EBI-10171697">
        <id>Q6A162</id>
        <label>KRT40</label>
    </interactant>
    <organismsDiffer>false</organismsDiffer>
    <experiments>6</experiments>
</comment>
<comment type="interaction">
    <interactant intactId="EBI-2568609">
        <id>Q9BSJ6</id>
    </interactant>
    <interactant intactId="EBI-944295">
        <id>Q969L2</id>
        <label>MAL2</label>
    </interactant>
    <organismsDiffer>false</organismsDiffer>
    <experiments>3</experiments>
</comment>
<comment type="interaction">
    <interactant intactId="EBI-2568609">
        <id>Q9BSJ6</id>
    </interactant>
    <interactant intactId="EBI-977302">
        <id>P04156</id>
        <label>PRNP</label>
    </interactant>
    <organismsDiffer>false</organismsDiffer>
    <experiments>5</experiments>
</comment>
<comment type="interaction">
    <interactant intactId="EBI-2568609">
        <id>Q9BSJ6</id>
    </interactant>
    <interactant intactId="EBI-726876">
        <id>Q6NUQ1</id>
        <label>RINT1</label>
    </interactant>
    <organismsDiffer>false</organismsDiffer>
    <experiments>3</experiments>
</comment>
<comment type="interaction">
    <interactant intactId="EBI-2568609">
        <id>Q9BSJ6</id>
    </interactant>
    <interactant intactId="EBI-11522811">
        <id>Q8IUQ4-2</id>
        <label>SIAH1</label>
    </interactant>
    <organismsDiffer>false</organismsDiffer>
    <experiments>3</experiments>
</comment>
<comment type="interaction">
    <interactant intactId="EBI-2568609">
        <id>Q9BSJ6</id>
    </interactant>
    <interactant intactId="EBI-413317">
        <id>Q96R06</id>
        <label>SPAG5</label>
    </interactant>
    <organismsDiffer>false</organismsDiffer>
    <experiments>3</experiments>
</comment>
<comment type="interaction">
    <interactant intactId="EBI-2568609">
        <id>Q9BSJ6</id>
    </interactant>
    <interactant intactId="EBI-2212028">
        <id>Q9Y2D8</id>
        <label>SSX2IP</label>
    </interactant>
    <organismsDiffer>false</organismsDiffer>
    <experiments>3</experiments>
</comment>
<comment type="interaction">
    <interactant intactId="EBI-2568609">
        <id>Q9BSJ6</id>
    </interactant>
    <interactant intactId="EBI-717422">
        <id>Q12800</id>
        <label>TFCP2</label>
    </interactant>
    <organismsDiffer>false</organismsDiffer>
    <experiments>3</experiments>
</comment>
<comment type="interaction">
    <interactant intactId="EBI-2568609">
        <id>Q9BSJ6</id>
    </interactant>
    <interactant intactId="EBI-719493">
        <id>P14373</id>
        <label>TRIM27</label>
    </interactant>
    <organismsDiffer>false</organismsDiffer>
    <experiments>9</experiments>
</comment>
<comment type="interaction">
    <interactant intactId="EBI-2568609">
        <id>Q9BSJ6</id>
    </interactant>
    <interactant intactId="EBI-2799833">
        <id>Q8N1B4</id>
        <label>VPS52</label>
    </interactant>
    <organismsDiffer>false</organismsDiffer>
    <experiments>3</experiments>
</comment>
<comment type="subcellular location">
    <subcellularLocation>
        <location evidence="2 4">Nucleus</location>
    </subcellularLocation>
    <subcellularLocation>
        <location evidence="4">Nucleus</location>
        <location evidence="4">Nucleolus</location>
    </subcellularLocation>
    <text evidence="4">Partially localizes to the nucleolus.</text>
</comment>
<comment type="alternative products">
    <event type="alternative splicing"/>
    <isoform>
        <id>Q9BSJ6-1</id>
        <name>1</name>
        <sequence type="displayed"/>
    </isoform>
    <isoform>
        <id>Q9BSJ6-2</id>
        <name>2</name>
        <sequence type="described" ref="VSP_023997"/>
    </isoform>
</comment>
<comment type="tissue specificity">
    <text evidence="2 4">Expressed in thymus (at protein level). Detected in spleen, colon, ovary and small intestines.</text>
</comment>
<comment type="developmental stage">
    <text evidence="3">Regulated in a cell-cycle dependent manner, with lowest levels in quiescent cells or at G1 phase. Progressive up-regulation starting at S phase and peaking at G2 and G2/M phases, followed by a drastic drop as cells exit mitosis (at protein level).</text>
</comment>
<comment type="domain">
    <text evidence="3">The N-terminal destruction box 2 (D-box 2) is required for APC/C ubiquitination and proteasomal degradation.</text>
</comment>
<comment type="PTM">
    <text evidence="3">Ubiquitinated by the anaphase-promoting complex/cyclosome (APC/C) complex in the presence of FZR1, leading to its degradation by the proteasome during mitotic exit. However, degradation is not essential for normal mitotic progression within a single cell cycle.</text>
</comment>
<gene>
    <name evidence="12" type="primary">PIMREG</name>
    <name evidence="9 10" type="synonym">CATS</name>
    <name evidence="12" type="synonym">FAM64A</name>
    <name evidence="8" type="synonym">RCS1</name>
</gene>
<dbReference type="EMBL" id="AK001018">
    <property type="protein sequence ID" value="BAA91468.1"/>
    <property type="molecule type" value="mRNA"/>
</dbReference>
<dbReference type="EMBL" id="AK001353">
    <property type="protein sequence ID" value="BAA91644.1"/>
    <property type="molecule type" value="mRNA"/>
</dbReference>
<dbReference type="EMBL" id="AC055872">
    <property type="status" value="NOT_ANNOTATED_CDS"/>
    <property type="molecule type" value="Genomic_DNA"/>
</dbReference>
<dbReference type="EMBL" id="BC005004">
    <property type="protein sequence ID" value="AAH05004.1"/>
    <property type="molecule type" value="mRNA"/>
</dbReference>
<dbReference type="EMBL" id="BC013966">
    <property type="protein sequence ID" value="AAH13966.1"/>
    <property type="molecule type" value="mRNA"/>
</dbReference>
<dbReference type="CCDS" id="CCDS32541.1">
    <molecule id="Q9BSJ6-2"/>
</dbReference>
<dbReference type="CCDS" id="CCDS56016.1">
    <molecule id="Q9BSJ6-1"/>
</dbReference>
<dbReference type="RefSeq" id="NP_001182157.1">
    <molecule id="Q9BSJ6-1"/>
    <property type="nucleotide sequence ID" value="NM_001195228.2"/>
</dbReference>
<dbReference type="RefSeq" id="NP_061886.2">
    <molecule id="Q9BSJ6-2"/>
    <property type="nucleotide sequence ID" value="NM_019013.3"/>
</dbReference>
<dbReference type="RefSeq" id="XP_047292267.1">
    <molecule id="Q9BSJ6-2"/>
    <property type="nucleotide sequence ID" value="XM_047436311.1"/>
</dbReference>
<dbReference type="RefSeq" id="XP_054172506.1">
    <molecule id="Q9BSJ6-2"/>
    <property type="nucleotide sequence ID" value="XM_054316531.1"/>
</dbReference>
<dbReference type="BioGRID" id="119983">
    <property type="interactions" value="44"/>
</dbReference>
<dbReference type="DIP" id="DIP-56370N"/>
<dbReference type="FunCoup" id="Q9BSJ6">
    <property type="interactions" value="784"/>
</dbReference>
<dbReference type="IntAct" id="Q9BSJ6">
    <property type="interactions" value="38"/>
</dbReference>
<dbReference type="MINT" id="Q9BSJ6"/>
<dbReference type="STRING" id="9606.ENSP00000250056"/>
<dbReference type="GlyGen" id="Q9BSJ6">
    <property type="glycosylation" value="1 site, 1 O-linked glycan (1 site)"/>
</dbReference>
<dbReference type="iPTMnet" id="Q9BSJ6"/>
<dbReference type="PhosphoSitePlus" id="Q9BSJ6"/>
<dbReference type="BioMuta" id="PIMREG"/>
<dbReference type="DMDM" id="74733018"/>
<dbReference type="jPOST" id="Q9BSJ6"/>
<dbReference type="MassIVE" id="Q9BSJ6"/>
<dbReference type="PaxDb" id="9606-ENSP00000250056"/>
<dbReference type="PeptideAtlas" id="Q9BSJ6"/>
<dbReference type="ProteomicsDB" id="78904">
    <molecule id="Q9BSJ6-1"/>
</dbReference>
<dbReference type="ProteomicsDB" id="78905">
    <molecule id="Q9BSJ6-2"/>
</dbReference>
<dbReference type="Pumba" id="Q9BSJ6"/>
<dbReference type="Antibodypedia" id="42756">
    <property type="antibodies" value="74 antibodies from 16 providers"/>
</dbReference>
<dbReference type="DNASU" id="54478"/>
<dbReference type="Ensembl" id="ENST00000250056.12">
    <molecule id="Q9BSJ6-1"/>
    <property type="protein sequence ID" value="ENSP00000250056.8"/>
    <property type="gene ID" value="ENSG00000129195.16"/>
</dbReference>
<dbReference type="Ensembl" id="ENST00000572447.6">
    <molecule id="Q9BSJ6-2"/>
    <property type="protein sequence ID" value="ENSP00000459235.1"/>
    <property type="gene ID" value="ENSG00000129195.16"/>
</dbReference>
<dbReference type="Ensembl" id="ENST00000576056.5">
    <molecule id="Q9BSJ6-2"/>
    <property type="protein sequence ID" value="ENSP00000458534.1"/>
    <property type="gene ID" value="ENSG00000129195.16"/>
</dbReference>
<dbReference type="GeneID" id="54478"/>
<dbReference type="KEGG" id="hsa:54478"/>
<dbReference type="MANE-Select" id="ENST00000572447.6">
    <molecule id="Q9BSJ6-2"/>
    <property type="protein sequence ID" value="ENSP00000459235.1"/>
    <property type="RefSeq nucleotide sequence ID" value="NM_019013.3"/>
    <property type="RefSeq protein sequence ID" value="NP_061886.2"/>
</dbReference>
<dbReference type="UCSC" id="uc002gcu.3">
    <molecule id="Q9BSJ6-1"/>
    <property type="organism name" value="human"/>
</dbReference>
<dbReference type="AGR" id="HGNC:25483"/>
<dbReference type="CTD" id="54478"/>
<dbReference type="DisGeNET" id="54478"/>
<dbReference type="GeneCards" id="PIMREG"/>
<dbReference type="HGNC" id="HGNC:25483">
    <property type="gene designation" value="PIMREG"/>
</dbReference>
<dbReference type="HPA" id="ENSG00000129195">
    <property type="expression patterns" value="Tissue enhanced (lymphoid)"/>
</dbReference>
<dbReference type="MIM" id="617611">
    <property type="type" value="gene"/>
</dbReference>
<dbReference type="neXtProt" id="NX_Q9BSJ6"/>
<dbReference type="OpenTargets" id="ENSG00000129195"/>
<dbReference type="PharmGKB" id="PA142671874"/>
<dbReference type="VEuPathDB" id="HostDB:ENSG00000129195"/>
<dbReference type="eggNOG" id="ENOG502S0SN">
    <property type="taxonomic scope" value="Eukaryota"/>
</dbReference>
<dbReference type="GeneTree" id="ENSGT00390000008128"/>
<dbReference type="HOGENOM" id="CLU_1209428_0_0_1"/>
<dbReference type="InParanoid" id="Q9BSJ6"/>
<dbReference type="OMA" id="SNYYYLM"/>
<dbReference type="OrthoDB" id="9898669at2759"/>
<dbReference type="PAN-GO" id="Q9BSJ6">
    <property type="GO annotations" value="0 GO annotations based on evolutionary models"/>
</dbReference>
<dbReference type="PhylomeDB" id="Q9BSJ6"/>
<dbReference type="TreeFam" id="TF336322"/>
<dbReference type="PathwayCommons" id="Q9BSJ6"/>
<dbReference type="SignaLink" id="Q9BSJ6"/>
<dbReference type="SIGNOR" id="Q9BSJ6"/>
<dbReference type="BioGRID-ORCS" id="54478">
    <property type="hits" value="11 hits in 1155 CRISPR screens"/>
</dbReference>
<dbReference type="CD-CODE" id="91857CE7">
    <property type="entry name" value="Nucleolus"/>
</dbReference>
<dbReference type="ChiTaRS" id="FAM64A">
    <property type="organism name" value="human"/>
</dbReference>
<dbReference type="GenomeRNAi" id="54478"/>
<dbReference type="Pharos" id="Q9BSJ6">
    <property type="development level" value="Tbio"/>
</dbReference>
<dbReference type="PRO" id="PR:Q9BSJ6"/>
<dbReference type="Proteomes" id="UP000005640">
    <property type="component" value="Chromosome 17"/>
</dbReference>
<dbReference type="RNAct" id="Q9BSJ6">
    <property type="molecule type" value="protein"/>
</dbReference>
<dbReference type="Bgee" id="ENSG00000129195">
    <property type="expression patterns" value="Expressed in ventricular zone and 109 other cell types or tissues"/>
</dbReference>
<dbReference type="ExpressionAtlas" id="Q9BSJ6">
    <property type="expression patterns" value="baseline and differential"/>
</dbReference>
<dbReference type="GO" id="GO:0005730">
    <property type="term" value="C:nucleolus"/>
    <property type="evidence" value="ECO:0000314"/>
    <property type="project" value="BHF-UCL"/>
</dbReference>
<dbReference type="GO" id="GO:0005654">
    <property type="term" value="C:nucleoplasm"/>
    <property type="evidence" value="ECO:0000314"/>
    <property type="project" value="HPA"/>
</dbReference>
<dbReference type="GO" id="GO:0051301">
    <property type="term" value="P:cell division"/>
    <property type="evidence" value="ECO:0007669"/>
    <property type="project" value="UniProtKB-KW"/>
</dbReference>
<dbReference type="InterPro" id="IPR009932">
    <property type="entry name" value="RCS1"/>
</dbReference>
<dbReference type="PANTHER" id="PTHR35819">
    <property type="entry name" value="PICALM INTERACTING MITOTIC REGULATOR PIMREG"/>
    <property type="match status" value="1"/>
</dbReference>
<dbReference type="PANTHER" id="PTHR35819:SF1">
    <property type="entry name" value="PROTEIN PIMREG"/>
    <property type="match status" value="1"/>
</dbReference>
<dbReference type="Pfam" id="PF07326">
    <property type="entry name" value="RCS1"/>
    <property type="match status" value="1"/>
</dbReference>
<keyword id="KW-0025">Alternative splicing</keyword>
<keyword id="KW-0131">Cell cycle</keyword>
<keyword id="KW-0132">Cell division</keyword>
<keyword id="KW-0498">Mitosis</keyword>
<keyword id="KW-0539">Nucleus</keyword>
<keyword id="KW-0597">Phosphoprotein</keyword>
<keyword id="KW-1267">Proteomics identification</keyword>
<keyword id="KW-1185">Reference proteome</keyword>
<keyword id="KW-0677">Repeat</keyword>
<keyword id="KW-0832">Ubl conjugation</keyword>
<feature type="chain" id="PRO_0000281159" description="Protein PIMREG">
    <location>
        <begin position="1"/>
        <end position="248"/>
    </location>
</feature>
<feature type="region of interest" description="Disordered" evidence="1">
    <location>
        <begin position="1"/>
        <end position="32"/>
    </location>
</feature>
<feature type="region of interest" description="Disordered" evidence="1">
    <location>
        <begin position="117"/>
        <end position="205"/>
    </location>
</feature>
<feature type="short sequence motif" description="D-box 1">
    <location>
        <begin position="14"/>
        <end position="17"/>
    </location>
</feature>
<feature type="short sequence motif" description="D-box 2">
    <location>
        <begin position="53"/>
        <end position="56"/>
    </location>
</feature>
<feature type="compositionally biased region" description="Polar residues" evidence="1">
    <location>
        <begin position="1"/>
        <end position="10"/>
    </location>
</feature>
<feature type="compositionally biased region" description="Polar residues" evidence="1">
    <location>
        <begin position="132"/>
        <end position="143"/>
    </location>
</feature>
<feature type="compositionally biased region" description="Polar residues" evidence="1">
    <location>
        <begin position="186"/>
        <end position="198"/>
    </location>
</feature>
<feature type="modified residue" description="Phosphoserine" evidence="16">
    <location>
        <position position="11"/>
    </location>
</feature>
<feature type="modified residue" description="Phosphoserine" evidence="13 14 15 16">
    <location>
        <position position="16"/>
    </location>
</feature>
<feature type="modified residue" description="Phosphoserine" evidence="14">
    <location>
        <position position="129"/>
    </location>
</feature>
<feature type="modified residue" description="Phosphoserine; by UHMK1; in vitro" evidence="5 14">
    <location>
        <position position="131"/>
    </location>
</feature>
<feature type="modified residue" description="Phosphoserine" evidence="13">
    <location>
        <position position="199"/>
    </location>
</feature>
<feature type="modified residue" description="Phosphoserine" evidence="13">
    <location>
        <position position="201"/>
    </location>
</feature>
<feature type="splice variant" id="VSP_023997" description="In isoform 2." evidence="6 7">
    <original>RKQALSDRQGFILKDVYASP</original>
    <variation>SGDIVSLIHD</variation>
    <location>
        <begin position="229"/>
        <end position="248"/>
    </location>
</feature>
<feature type="sequence variant" id="VAR_056873" description="In dbSNP:rs16955870.">
    <original>S</original>
    <variation>C</variation>
    <location>
        <position position="199"/>
    </location>
</feature>
<feature type="mutagenesis site" description="Weak reduction in ubiquitination. Complete loss of ubiquitination; when associated with 53-A--A-56." evidence="3">
    <original>RRSL</original>
    <variation>ARSA</variation>
    <location>
        <begin position="14"/>
        <end position="17"/>
    </location>
</feature>
<feature type="mutagenesis site" description="Great reduction in ubiquitination. Complete loss of ubiquitination; when associated with 14-A--A-17." evidence="3">
    <original>RLPL</original>
    <variation>ALPA</variation>
    <location>
        <begin position="53"/>
        <end position="56"/>
    </location>
</feature>
<feature type="mutagenesis site" description="No effect on phosphorylation." evidence="5">
    <original>S</original>
    <variation>A</variation>
    <location>
        <position position="129"/>
    </location>
</feature>
<feature type="mutagenesis site" description="Reduced phosphorylation." evidence="5">
    <original>S</original>
    <variation>A</variation>
    <location>
        <position position="131"/>
    </location>
</feature>
<feature type="sequence conflict" description="In Ref. 1; BAA91468." evidence="11" ref="1">
    <original>A</original>
    <variation>T</variation>
    <location>
        <position position="58"/>
    </location>
</feature>
<feature type="sequence conflict" description="In Ref. 1; BAA91644." evidence="11" ref="1">
    <original>M</original>
    <variation>L</variation>
    <location>
        <position position="167"/>
    </location>
</feature>
<sequence length="248" mass="27480">MASRWQNMGTSVRRRSLQHQEQLEDSKELQPVVSHQETSVGALGSLCRQFQRRLPLRAVNLNLRAGPSWKRLETPEPGQQGLQAAARSAKSALGAVSQRIQESCQSGTKWLVETQVKARRRKRGAQKGSGSPTHSLSQKSTRLSGAAPAHSAADPWEKEHHRLSVRMGSHAHPLRRSRREAAFRSPYSSTEPLCSPSESDSDLEPVGAGIQHLQKLSQELDEAIMAEERKQALSDRQGFILKDVYASP</sequence>
<organism>
    <name type="scientific">Homo sapiens</name>
    <name type="common">Human</name>
    <dbReference type="NCBI Taxonomy" id="9606"/>
    <lineage>
        <taxon>Eukaryota</taxon>
        <taxon>Metazoa</taxon>
        <taxon>Chordata</taxon>
        <taxon>Craniata</taxon>
        <taxon>Vertebrata</taxon>
        <taxon>Euteleostomi</taxon>
        <taxon>Mammalia</taxon>
        <taxon>Eutheria</taxon>
        <taxon>Euarchontoglires</taxon>
        <taxon>Primates</taxon>
        <taxon>Haplorrhini</taxon>
        <taxon>Catarrhini</taxon>
        <taxon>Hominidae</taxon>
        <taxon>Homo</taxon>
    </lineage>
</organism>
<reference key="1">
    <citation type="journal article" date="2004" name="Nat. Genet.">
        <title>Complete sequencing and characterization of 21,243 full-length human cDNAs.</title>
        <authorList>
            <person name="Ota T."/>
            <person name="Suzuki Y."/>
            <person name="Nishikawa T."/>
            <person name="Otsuki T."/>
            <person name="Sugiyama T."/>
            <person name="Irie R."/>
            <person name="Wakamatsu A."/>
            <person name="Hayashi K."/>
            <person name="Sato H."/>
            <person name="Nagai K."/>
            <person name="Kimura K."/>
            <person name="Makita H."/>
            <person name="Sekine M."/>
            <person name="Obayashi M."/>
            <person name="Nishi T."/>
            <person name="Shibahara T."/>
            <person name="Tanaka T."/>
            <person name="Ishii S."/>
            <person name="Yamamoto J."/>
            <person name="Saito K."/>
            <person name="Kawai Y."/>
            <person name="Isono Y."/>
            <person name="Nakamura Y."/>
            <person name="Nagahari K."/>
            <person name="Murakami K."/>
            <person name="Yasuda T."/>
            <person name="Iwayanagi T."/>
            <person name="Wagatsuma M."/>
            <person name="Shiratori A."/>
            <person name="Sudo H."/>
            <person name="Hosoiri T."/>
            <person name="Kaku Y."/>
            <person name="Kodaira H."/>
            <person name="Kondo H."/>
            <person name="Sugawara M."/>
            <person name="Takahashi M."/>
            <person name="Kanda K."/>
            <person name="Yokoi T."/>
            <person name="Furuya T."/>
            <person name="Kikkawa E."/>
            <person name="Omura Y."/>
            <person name="Abe K."/>
            <person name="Kamihara K."/>
            <person name="Katsuta N."/>
            <person name="Sato K."/>
            <person name="Tanikawa M."/>
            <person name="Yamazaki M."/>
            <person name="Ninomiya K."/>
            <person name="Ishibashi T."/>
            <person name="Yamashita H."/>
            <person name="Murakawa K."/>
            <person name="Fujimori K."/>
            <person name="Tanai H."/>
            <person name="Kimata M."/>
            <person name="Watanabe M."/>
            <person name="Hiraoka S."/>
            <person name="Chiba Y."/>
            <person name="Ishida S."/>
            <person name="Ono Y."/>
            <person name="Takiguchi S."/>
            <person name="Watanabe S."/>
            <person name="Yosida M."/>
            <person name="Hotuta T."/>
            <person name="Kusano J."/>
            <person name="Kanehori K."/>
            <person name="Takahashi-Fujii A."/>
            <person name="Hara H."/>
            <person name="Tanase T.-O."/>
            <person name="Nomura Y."/>
            <person name="Togiya S."/>
            <person name="Komai F."/>
            <person name="Hara R."/>
            <person name="Takeuchi K."/>
            <person name="Arita M."/>
            <person name="Imose N."/>
            <person name="Musashino K."/>
            <person name="Yuuki H."/>
            <person name="Oshima A."/>
            <person name="Sasaki N."/>
            <person name="Aotsuka S."/>
            <person name="Yoshikawa Y."/>
            <person name="Matsunawa H."/>
            <person name="Ichihara T."/>
            <person name="Shiohata N."/>
            <person name="Sano S."/>
            <person name="Moriya S."/>
            <person name="Momiyama H."/>
            <person name="Satoh N."/>
            <person name="Takami S."/>
            <person name="Terashima Y."/>
            <person name="Suzuki O."/>
            <person name="Nakagawa S."/>
            <person name="Senoh A."/>
            <person name="Mizoguchi H."/>
            <person name="Goto Y."/>
            <person name="Shimizu F."/>
            <person name="Wakebe H."/>
            <person name="Hishigaki H."/>
            <person name="Watanabe T."/>
            <person name="Sugiyama A."/>
            <person name="Takemoto M."/>
            <person name="Kawakami B."/>
            <person name="Yamazaki M."/>
            <person name="Watanabe K."/>
            <person name="Kumagai A."/>
            <person name="Itakura S."/>
            <person name="Fukuzumi Y."/>
            <person name="Fujimori Y."/>
            <person name="Komiyama M."/>
            <person name="Tashiro H."/>
            <person name="Tanigami A."/>
            <person name="Fujiwara T."/>
            <person name="Ono T."/>
            <person name="Yamada K."/>
            <person name="Fujii Y."/>
            <person name="Ozaki K."/>
            <person name="Hirao M."/>
            <person name="Ohmori Y."/>
            <person name="Kawabata A."/>
            <person name="Hikiji T."/>
            <person name="Kobatake N."/>
            <person name="Inagaki H."/>
            <person name="Ikema Y."/>
            <person name="Okamoto S."/>
            <person name="Okitani R."/>
            <person name="Kawakami T."/>
            <person name="Noguchi S."/>
            <person name="Itoh T."/>
            <person name="Shigeta K."/>
            <person name="Senba T."/>
            <person name="Matsumura K."/>
            <person name="Nakajima Y."/>
            <person name="Mizuno T."/>
            <person name="Morinaga M."/>
            <person name="Sasaki M."/>
            <person name="Togashi T."/>
            <person name="Oyama M."/>
            <person name="Hata H."/>
            <person name="Watanabe M."/>
            <person name="Komatsu T."/>
            <person name="Mizushima-Sugano J."/>
            <person name="Satoh T."/>
            <person name="Shirai Y."/>
            <person name="Takahashi Y."/>
            <person name="Nakagawa K."/>
            <person name="Okumura K."/>
            <person name="Nagase T."/>
            <person name="Nomura N."/>
            <person name="Kikuchi H."/>
            <person name="Masuho Y."/>
            <person name="Yamashita R."/>
            <person name="Nakai K."/>
            <person name="Yada T."/>
            <person name="Nakamura Y."/>
            <person name="Ohara O."/>
            <person name="Isogai T."/>
            <person name="Sugano S."/>
        </authorList>
    </citation>
    <scope>NUCLEOTIDE SEQUENCE [LARGE SCALE MRNA] (ISOFORMS 1 AND 2)</scope>
</reference>
<reference key="2">
    <citation type="journal article" date="2006" name="Nature">
        <title>DNA sequence of human chromosome 17 and analysis of rearrangement in the human lineage.</title>
        <authorList>
            <person name="Zody M.C."/>
            <person name="Garber M."/>
            <person name="Adams D.J."/>
            <person name="Sharpe T."/>
            <person name="Harrow J."/>
            <person name="Lupski J.R."/>
            <person name="Nicholson C."/>
            <person name="Searle S.M."/>
            <person name="Wilming L."/>
            <person name="Young S.K."/>
            <person name="Abouelleil A."/>
            <person name="Allen N.R."/>
            <person name="Bi W."/>
            <person name="Bloom T."/>
            <person name="Borowsky M.L."/>
            <person name="Bugalter B.E."/>
            <person name="Butler J."/>
            <person name="Chang J.L."/>
            <person name="Chen C.-K."/>
            <person name="Cook A."/>
            <person name="Corum B."/>
            <person name="Cuomo C.A."/>
            <person name="de Jong P.J."/>
            <person name="DeCaprio D."/>
            <person name="Dewar K."/>
            <person name="FitzGerald M."/>
            <person name="Gilbert J."/>
            <person name="Gibson R."/>
            <person name="Gnerre S."/>
            <person name="Goldstein S."/>
            <person name="Grafham D.V."/>
            <person name="Grocock R."/>
            <person name="Hafez N."/>
            <person name="Hagopian D.S."/>
            <person name="Hart E."/>
            <person name="Norman C.H."/>
            <person name="Humphray S."/>
            <person name="Jaffe D.B."/>
            <person name="Jones M."/>
            <person name="Kamal M."/>
            <person name="Khodiyar V.K."/>
            <person name="LaButti K."/>
            <person name="Laird G."/>
            <person name="Lehoczky J."/>
            <person name="Liu X."/>
            <person name="Lokyitsang T."/>
            <person name="Loveland J."/>
            <person name="Lui A."/>
            <person name="Macdonald P."/>
            <person name="Major J.E."/>
            <person name="Matthews L."/>
            <person name="Mauceli E."/>
            <person name="McCarroll S.A."/>
            <person name="Mihalev A.H."/>
            <person name="Mudge J."/>
            <person name="Nguyen C."/>
            <person name="Nicol R."/>
            <person name="O'Leary S.B."/>
            <person name="Osoegawa K."/>
            <person name="Schwartz D.C."/>
            <person name="Shaw-Smith C."/>
            <person name="Stankiewicz P."/>
            <person name="Steward C."/>
            <person name="Swarbreck D."/>
            <person name="Venkataraman V."/>
            <person name="Whittaker C.A."/>
            <person name="Yang X."/>
            <person name="Zimmer A.R."/>
            <person name="Bradley A."/>
            <person name="Hubbard T."/>
            <person name="Birren B.W."/>
            <person name="Rogers J."/>
            <person name="Lander E.S."/>
            <person name="Nusbaum C."/>
        </authorList>
    </citation>
    <scope>NUCLEOTIDE SEQUENCE [LARGE SCALE GENOMIC DNA]</scope>
</reference>
<reference key="3">
    <citation type="journal article" date="2004" name="Genome Res.">
        <title>The status, quality, and expansion of the NIH full-length cDNA project: the Mammalian Gene Collection (MGC).</title>
        <authorList>
            <consortium name="The MGC Project Team"/>
        </authorList>
    </citation>
    <scope>NUCLEOTIDE SEQUENCE [LARGE SCALE MRNA] (ISOFORMS 1 AND 2)</scope>
    <source>
        <tissue>Colon</tissue>
        <tissue>Lung</tissue>
    </source>
</reference>
<reference key="4">
    <citation type="journal article" date="2006" name="Oncogene">
        <title>The novel CALM interactor CATS influences the subcellular localization of the leukemogenic fusion protein CALM/AF10.</title>
        <authorList>
            <person name="Archangelo L.F."/>
            <person name="Glaesner J."/>
            <person name="Krause A."/>
            <person name="Bohlander S.K."/>
        </authorList>
    </citation>
    <scope>SUBCELLULAR LOCATION</scope>
    <scope>INTERACTION WITH PICALM</scope>
    <scope>TISSUE SPECIFICITY</scope>
    <scope>IDENTIFICATION OF ISOFORMS 1 AND 2</scope>
</reference>
<reference key="5">
    <citation type="journal article" date="2008" name="Mol. Cell">
        <title>Kinase-selective enrichment enables quantitative phosphoproteomics of the kinome across the cell cycle.</title>
        <authorList>
            <person name="Daub H."/>
            <person name="Olsen J.V."/>
            <person name="Bairlein M."/>
            <person name="Gnad F."/>
            <person name="Oppermann F.S."/>
            <person name="Korner R."/>
            <person name="Greff Z."/>
            <person name="Keri G."/>
            <person name="Stemmann O."/>
            <person name="Mann M."/>
        </authorList>
    </citation>
    <scope>IDENTIFICATION BY MASS SPECTROMETRY [LARGE SCALE ANALYSIS]</scope>
    <source>
        <tissue>Cervix carcinoma</tissue>
    </source>
</reference>
<reference key="6">
    <citation type="journal article" date="2008" name="Mol. Oncol.">
        <title>The CALM and CALM/AF10 interactor CATS is a marker for proliferation.</title>
        <authorList>
            <person name="Archangelo L.F."/>
            <person name="Greif P.A."/>
            <person name="Hoelzel M."/>
            <person name="Harasim T."/>
            <person name="Kremmer E."/>
            <person name="Przemeck G.K."/>
            <person name="Eick D."/>
            <person name="Deshpande A.J."/>
            <person name="Buske C."/>
            <person name="de Angelis M.H."/>
            <person name="Saad S.T."/>
            <person name="Bohlander S.K."/>
        </authorList>
    </citation>
    <scope>TISSUE SPECIFICITY</scope>
    <scope>SUBCELLULAR LOCATION</scope>
    <scope>INDUCTION</scope>
</reference>
<reference key="7">
    <citation type="journal article" date="2008" name="Proc. Natl. Acad. Sci. U.S.A.">
        <title>A quantitative atlas of mitotic phosphorylation.</title>
        <authorList>
            <person name="Dephoure N."/>
            <person name="Zhou C."/>
            <person name="Villen J."/>
            <person name="Beausoleil S.A."/>
            <person name="Bakalarski C.E."/>
            <person name="Elledge S.J."/>
            <person name="Gygi S.P."/>
        </authorList>
    </citation>
    <scope>PHOSPHORYLATION [LARGE SCALE ANALYSIS] AT SER-16; SER-199 AND SER-201</scope>
    <scope>IDENTIFICATION BY MASS SPECTROMETRY [LARGE SCALE ANALYSIS]</scope>
    <source>
        <tissue>Cervix carcinoma</tissue>
    </source>
</reference>
<reference key="8">
    <citation type="journal article" date="2008" name="Proc. Natl. Acad. Sci. U.S.A.">
        <title>RCS1, a substrate of APC/C, controls the metaphase to anaphase transition.</title>
        <authorList>
            <person name="Zhao W.M."/>
            <person name="Coppinger J.A."/>
            <person name="Seki A."/>
            <person name="Cheng X.L."/>
            <person name="Yates J.R. III"/>
            <person name="Fang G."/>
        </authorList>
    </citation>
    <scope>FUNCTION IN MITOSIS PROGRESSION</scope>
    <scope>INTERACTION WITH NURD COMPLEX</scope>
    <scope>DEVELOPMENTAL STAGE</scope>
    <scope>D-BOX MOTIF</scope>
    <scope>MUTAGENESIS OF 14-ARG--LEU-17 AND 53-ARG--LEU-56</scope>
    <scope>UBIQUITINATION</scope>
</reference>
<reference key="9">
    <citation type="journal article" date="2010" name="Sci. Signal.">
        <title>Quantitative phosphoproteomics reveals widespread full phosphorylation site occupancy during mitosis.</title>
        <authorList>
            <person name="Olsen J.V."/>
            <person name="Vermeulen M."/>
            <person name="Santamaria A."/>
            <person name="Kumar C."/>
            <person name="Miller M.L."/>
            <person name="Jensen L.J."/>
            <person name="Gnad F."/>
            <person name="Cox J."/>
            <person name="Jensen T.S."/>
            <person name="Nigg E.A."/>
            <person name="Brunak S."/>
            <person name="Mann M."/>
        </authorList>
    </citation>
    <scope>PHOSPHORYLATION [LARGE SCALE ANALYSIS] AT SER-16; SER-129 AND SER-131</scope>
    <scope>IDENTIFICATION BY MASS SPECTROMETRY [LARGE SCALE ANALYSIS]</scope>
    <source>
        <tissue>Cervix carcinoma</tissue>
    </source>
</reference>
<reference key="10">
    <citation type="journal article" date="2011" name="Sci. Signal.">
        <title>System-wide temporal characterization of the proteome and phosphoproteome of human embryonic stem cell differentiation.</title>
        <authorList>
            <person name="Rigbolt K.T."/>
            <person name="Prokhorova T.A."/>
            <person name="Akimov V."/>
            <person name="Henningsen J."/>
            <person name="Johansen P.T."/>
            <person name="Kratchmarova I."/>
            <person name="Kassem M."/>
            <person name="Mann M."/>
            <person name="Olsen J.V."/>
            <person name="Blagoev B."/>
        </authorList>
    </citation>
    <scope>PHOSPHORYLATION [LARGE SCALE ANALYSIS] AT SER-16</scope>
    <scope>IDENTIFICATION BY MASS SPECTROMETRY [LARGE SCALE ANALYSIS]</scope>
</reference>
<reference key="11">
    <citation type="journal article" date="2013" name="Biochim. Biophys. Acta">
        <title>The CATS (FAM64A) protein is a substrate of the kinase interacting stathmin (KIS).</title>
        <authorList>
            <person name="Archangelo L.F."/>
            <person name="Greif P.A."/>
            <person name="Maucuer A."/>
            <person name="Manceau V."/>
            <person name="Koneru N."/>
            <person name="Bigarella C.L."/>
            <person name="Niemann F."/>
            <person name="Dos Santos M.T."/>
            <person name="Kobarg J."/>
            <person name="Bohlander S.K."/>
            <person name="Saad S.T."/>
        </authorList>
    </citation>
    <scope>SUBCELLULAR LOCATION</scope>
    <scope>PHOSPHORYLATION AT SER-131</scope>
    <scope>MUTAGENESIS OF SER-129 AND SER-131</scope>
</reference>
<reference key="12">
    <citation type="journal article" date="2013" name="J. Proteome Res.">
        <title>Toward a comprehensive characterization of a human cancer cell phosphoproteome.</title>
        <authorList>
            <person name="Zhou H."/>
            <person name="Di Palma S."/>
            <person name="Preisinger C."/>
            <person name="Peng M."/>
            <person name="Polat A.N."/>
            <person name="Heck A.J."/>
            <person name="Mohammed S."/>
        </authorList>
    </citation>
    <scope>PHOSPHORYLATION [LARGE SCALE ANALYSIS] AT SER-11 AND SER-16</scope>
    <scope>IDENTIFICATION BY MASS SPECTROMETRY [LARGE SCALE ANALYSIS]</scope>
    <source>
        <tissue>Cervix carcinoma</tissue>
        <tissue>Erythroleukemia</tissue>
    </source>
</reference>
<evidence type="ECO:0000256" key="1">
    <source>
        <dbReference type="SAM" id="MobiDB-lite"/>
    </source>
</evidence>
<evidence type="ECO:0000269" key="2">
    <source>
    </source>
</evidence>
<evidence type="ECO:0000269" key="3">
    <source>
    </source>
</evidence>
<evidence type="ECO:0000269" key="4">
    <source>
    </source>
</evidence>
<evidence type="ECO:0000269" key="5">
    <source>
    </source>
</evidence>
<evidence type="ECO:0000303" key="6">
    <source>
    </source>
</evidence>
<evidence type="ECO:0000303" key="7">
    <source>
    </source>
</evidence>
<evidence type="ECO:0000303" key="8">
    <source>
    </source>
</evidence>
<evidence type="ECO:0000303" key="9">
    <source>
    </source>
</evidence>
<evidence type="ECO:0000303" key="10">
    <source>
    </source>
</evidence>
<evidence type="ECO:0000305" key="11"/>
<evidence type="ECO:0000312" key="12">
    <source>
        <dbReference type="HGNC" id="HGNC:25483"/>
    </source>
</evidence>
<evidence type="ECO:0007744" key="13">
    <source>
    </source>
</evidence>
<evidence type="ECO:0007744" key="14">
    <source>
    </source>
</evidence>
<evidence type="ECO:0007744" key="15">
    <source>
    </source>
</evidence>
<evidence type="ECO:0007744" key="16">
    <source>
    </source>
</evidence>
<protein>
    <recommendedName>
        <fullName evidence="11">Protein PIMREG</fullName>
    </recommendedName>
    <alternativeName>
        <fullName evidence="9 10">CALM-interactor expressed in thymus and spleen</fullName>
    </alternativeName>
    <alternativeName>
        <fullName evidence="12">PICALM-interacting mitotic regulator</fullName>
    </alternativeName>
    <alternativeName>
        <fullName evidence="8">Regulator of chromosome segregation protein 1</fullName>
    </alternativeName>
</protein>
<name>PIMRE_HUMAN</name>
<accession>Q9BSJ6</accession>
<accession>Q96CT4</accession>
<accession>Q9NVV1</accession>
<accession>Q9NWB5</accession>
<proteinExistence type="evidence at protein level"/>